<evidence type="ECO:0000250" key="1"/>
<evidence type="ECO:0000250" key="2">
    <source>
        <dbReference type="UniProtKB" id="O43187"/>
    </source>
</evidence>
<evidence type="ECO:0000255" key="3">
    <source>
        <dbReference type="PROSITE-ProRule" id="PRU00159"/>
    </source>
</evidence>
<evidence type="ECO:0000256" key="4">
    <source>
        <dbReference type="SAM" id="MobiDB-lite"/>
    </source>
</evidence>
<evidence type="ECO:0000305" key="5"/>
<reference key="1">
    <citation type="submission" date="2004-11" db="EMBL/GenBank/DDBJ databases">
        <authorList>
            <consortium name="The German cDNA consortium"/>
        </authorList>
    </citation>
    <scope>NUCLEOTIDE SEQUENCE [LARGE SCALE MRNA]</scope>
    <source>
        <tissue>Kidney</tissue>
    </source>
</reference>
<sequence>MACYIYQLPSWVLDDPCRNMDALSEWDWMEFASYVITDLTQLRKIKSMERVQGVSITRELLWWWGMRQATVRQLVDLLCRLELYRAAQIILNWKPAPEIRCPIPAFPDSVKPEKPLAASVKKAENEQEEGQPVRMATFPGPGSSPARAHQPAFLQPPEEDAPHSLRTDLPTSSDSKDFSTSIPKQEKLLSLAGDSLFWSEADVVQATDDFNQNHKISQGTFADVYRGYRHGTPFVFKKLRETACSSPGSIERFFQAELQICLRCCHPNVLPVLGFCAARQFHSFIYPYMANGSLQDRLQGQGGSDPLPWPQRVSICSGLLCAVEYLHGLEIIHSNVKSSNVLLDQNLTPKLAHPMAHLCPVNKRSKYTMMKTHLFRTSAAYLPEDFIRVGQLTKRVDIFSCGIVLAEVLTGIPAMDNNRSPVYLKDLLLSEIPSSTASPCSRKTGVENVMAKEICQKYLEKGAGRLPEDCAEALATAACLCLRKRNTSLQEVRGSVAAVEEWLRGREMLLPWSGLSEGTGSSSNTPEETDDVDNSSLDASSSVSVAPWAGAATPLLPTENGEGRLRVIVRREADSSSEACVGPEPPQDVTETSWQIDINEAKRKLMENILLYKEEKLDSIELFGP</sequence>
<comment type="function">
    <text evidence="1">Binds to the IL-1 type I receptor following IL-1 engagement, triggering intracellular signaling cascades leading to transcriptional up-regulation and mRNA stabilization.</text>
</comment>
<comment type="subunit">
    <text evidence="1">Interacts with MYD88. IL-1 stimulation leads to the formation of a signaling complex which dissociates from the IL-1 receptor following the binding of PELI1 (By similarity).</text>
</comment>
<comment type="domain">
    <text>The protein kinase domain is predicted to be catalytically inactive.</text>
</comment>
<comment type="similarity">
    <text evidence="5">Belongs to the protein kinase superfamily. TKL Ser/Thr protein kinase family. Pelle subfamily.</text>
</comment>
<comment type="caution">
    <text evidence="5">Asn-335 is present instead of the conserved Asp which is expected to be an active site residue.</text>
</comment>
<gene>
    <name type="primary">IRAK2</name>
</gene>
<accession>Q5R810</accession>
<proteinExistence type="evidence at transcript level"/>
<dbReference type="EMBL" id="CR859945">
    <property type="protein sequence ID" value="CAH92100.1"/>
    <property type="molecule type" value="mRNA"/>
</dbReference>
<dbReference type="SMR" id="Q5R810"/>
<dbReference type="FunCoup" id="Q5R810">
    <property type="interactions" value="1238"/>
</dbReference>
<dbReference type="STRING" id="9601.ENSPPYP00000015274"/>
<dbReference type="eggNOG" id="KOG1187">
    <property type="taxonomic scope" value="Eukaryota"/>
</dbReference>
<dbReference type="InParanoid" id="Q5R810"/>
<dbReference type="Proteomes" id="UP000001595">
    <property type="component" value="Unplaced"/>
</dbReference>
<dbReference type="GO" id="GO:0005737">
    <property type="term" value="C:cytoplasm"/>
    <property type="evidence" value="ECO:0007669"/>
    <property type="project" value="TreeGrafter"/>
</dbReference>
<dbReference type="GO" id="GO:0005634">
    <property type="term" value="C:nucleus"/>
    <property type="evidence" value="ECO:0007669"/>
    <property type="project" value="TreeGrafter"/>
</dbReference>
<dbReference type="GO" id="GO:0005886">
    <property type="term" value="C:plasma membrane"/>
    <property type="evidence" value="ECO:0007669"/>
    <property type="project" value="TreeGrafter"/>
</dbReference>
<dbReference type="GO" id="GO:0005524">
    <property type="term" value="F:ATP binding"/>
    <property type="evidence" value="ECO:0007669"/>
    <property type="project" value="UniProtKB-KW"/>
</dbReference>
<dbReference type="GO" id="GO:0004672">
    <property type="term" value="F:protein kinase activity"/>
    <property type="evidence" value="ECO:0007669"/>
    <property type="project" value="InterPro"/>
</dbReference>
<dbReference type="GO" id="GO:0071222">
    <property type="term" value="P:cellular response to lipopolysaccharide"/>
    <property type="evidence" value="ECO:0007669"/>
    <property type="project" value="TreeGrafter"/>
</dbReference>
<dbReference type="GO" id="GO:0070498">
    <property type="term" value="P:interleukin-1-mediated signaling pathway"/>
    <property type="evidence" value="ECO:0007669"/>
    <property type="project" value="TreeGrafter"/>
</dbReference>
<dbReference type="GO" id="GO:0035556">
    <property type="term" value="P:intracellular signal transduction"/>
    <property type="evidence" value="ECO:0007669"/>
    <property type="project" value="TreeGrafter"/>
</dbReference>
<dbReference type="GO" id="GO:0008063">
    <property type="term" value="P:Toll signaling pathway"/>
    <property type="evidence" value="ECO:0007669"/>
    <property type="project" value="TreeGrafter"/>
</dbReference>
<dbReference type="CDD" id="cd08795">
    <property type="entry name" value="Death_IRAK2"/>
    <property type="match status" value="1"/>
</dbReference>
<dbReference type="CDD" id="cd14157">
    <property type="entry name" value="STKc_IRAK2"/>
    <property type="match status" value="1"/>
</dbReference>
<dbReference type="FunFam" id="1.10.510.10:FF:000586">
    <property type="entry name" value="Interleukin-1 receptor-associated kinase-like 2"/>
    <property type="match status" value="1"/>
</dbReference>
<dbReference type="FunFam" id="1.10.533.10:FF:000030">
    <property type="entry name" value="Interleukin-1 receptor-associated kinase-like 2"/>
    <property type="match status" value="1"/>
</dbReference>
<dbReference type="FunFam" id="3.30.200.20:FF:000412">
    <property type="entry name" value="interleukin-1 receptor-associated kinase-like 2"/>
    <property type="match status" value="1"/>
</dbReference>
<dbReference type="Gene3D" id="1.10.533.10">
    <property type="entry name" value="Death Domain, Fas"/>
    <property type="match status" value="1"/>
</dbReference>
<dbReference type="Gene3D" id="3.30.200.20">
    <property type="entry name" value="Phosphorylase Kinase, domain 1"/>
    <property type="match status" value="1"/>
</dbReference>
<dbReference type="Gene3D" id="1.10.510.10">
    <property type="entry name" value="Transferase(Phosphotransferase) domain 1"/>
    <property type="match status" value="1"/>
</dbReference>
<dbReference type="InterPro" id="IPR011029">
    <property type="entry name" value="DEATH-like_dom_sf"/>
</dbReference>
<dbReference type="InterPro" id="IPR000488">
    <property type="entry name" value="Death_dom"/>
</dbReference>
<dbReference type="InterPro" id="IPR042151">
    <property type="entry name" value="Death_IRAK2"/>
</dbReference>
<dbReference type="InterPro" id="IPR011009">
    <property type="entry name" value="Kinase-like_dom_sf"/>
</dbReference>
<dbReference type="InterPro" id="IPR000719">
    <property type="entry name" value="Prot_kinase_dom"/>
</dbReference>
<dbReference type="PANTHER" id="PTHR24419">
    <property type="entry name" value="INTERLEUKIN-1 RECEPTOR-ASSOCIATED KINASE"/>
    <property type="match status" value="1"/>
</dbReference>
<dbReference type="PANTHER" id="PTHR24419:SF2">
    <property type="entry name" value="INTERLEUKIN-1 RECEPTOR-ASSOCIATED KINASE-LIKE 2"/>
    <property type="match status" value="1"/>
</dbReference>
<dbReference type="Pfam" id="PF00531">
    <property type="entry name" value="Death"/>
    <property type="match status" value="1"/>
</dbReference>
<dbReference type="Pfam" id="PF00069">
    <property type="entry name" value="Pkinase"/>
    <property type="match status" value="1"/>
</dbReference>
<dbReference type="SUPFAM" id="SSF47986">
    <property type="entry name" value="DEATH domain"/>
    <property type="match status" value="1"/>
</dbReference>
<dbReference type="SUPFAM" id="SSF56112">
    <property type="entry name" value="Protein kinase-like (PK-like)"/>
    <property type="match status" value="1"/>
</dbReference>
<dbReference type="PROSITE" id="PS50011">
    <property type="entry name" value="PROTEIN_KINASE_DOM"/>
    <property type="match status" value="1"/>
</dbReference>
<protein>
    <recommendedName>
        <fullName>Interleukin-1 receptor-associated kinase-like 2</fullName>
        <shortName>IRAK-2</shortName>
    </recommendedName>
</protein>
<keyword id="KW-0067">ATP-binding</keyword>
<keyword id="KW-0547">Nucleotide-binding</keyword>
<keyword id="KW-0597">Phosphoprotein</keyword>
<keyword id="KW-1185">Reference proteome</keyword>
<name>IRAK2_PONAB</name>
<feature type="chain" id="PRO_0000277561" description="Interleukin-1 receptor-associated kinase-like 2">
    <location>
        <begin position="1"/>
        <end position="625"/>
    </location>
</feature>
<feature type="domain" description="Death">
    <location>
        <begin position="13"/>
        <end position="94"/>
    </location>
</feature>
<feature type="domain" description="Protein kinase" evidence="3">
    <location>
        <begin position="210"/>
        <end position="503"/>
    </location>
</feature>
<feature type="region of interest" description="Disordered" evidence="4">
    <location>
        <begin position="111"/>
        <end position="181"/>
    </location>
</feature>
<feature type="region of interest" description="Disordered" evidence="4">
    <location>
        <begin position="513"/>
        <end position="539"/>
    </location>
</feature>
<feature type="compositionally biased region" description="Polar residues" evidence="4">
    <location>
        <begin position="169"/>
        <end position="181"/>
    </location>
</feature>
<feature type="compositionally biased region" description="Polar residues" evidence="4">
    <location>
        <begin position="516"/>
        <end position="526"/>
    </location>
</feature>
<feature type="binding site" evidence="3">
    <location>
        <begin position="216"/>
        <end position="224"/>
    </location>
    <ligand>
        <name>ATP</name>
        <dbReference type="ChEBI" id="CHEBI:30616"/>
    </ligand>
</feature>
<feature type="binding site" evidence="3">
    <location>
        <position position="237"/>
    </location>
    <ligand>
        <name>ATP</name>
        <dbReference type="ChEBI" id="CHEBI:30616"/>
    </ligand>
</feature>
<feature type="binding site" evidence="3">
    <location>
        <begin position="337"/>
        <end position="340"/>
    </location>
    <ligand>
        <name>ATP</name>
        <dbReference type="ChEBI" id="CHEBI:30616"/>
    </ligand>
</feature>
<feature type="modified residue" description="Phosphoserine" evidence="2">
    <location>
        <position position="144"/>
    </location>
</feature>
<organism>
    <name type="scientific">Pongo abelii</name>
    <name type="common">Sumatran orangutan</name>
    <name type="synonym">Pongo pygmaeus abelii</name>
    <dbReference type="NCBI Taxonomy" id="9601"/>
    <lineage>
        <taxon>Eukaryota</taxon>
        <taxon>Metazoa</taxon>
        <taxon>Chordata</taxon>
        <taxon>Craniata</taxon>
        <taxon>Vertebrata</taxon>
        <taxon>Euteleostomi</taxon>
        <taxon>Mammalia</taxon>
        <taxon>Eutheria</taxon>
        <taxon>Euarchontoglires</taxon>
        <taxon>Primates</taxon>
        <taxon>Haplorrhini</taxon>
        <taxon>Catarrhini</taxon>
        <taxon>Hominidae</taxon>
        <taxon>Pongo</taxon>
    </lineage>
</organism>